<sequence>MAVAANKRSVMTLFSGPTDIYSHQVRIVLAEKGVSFEIEHVEKDNPPQDLIDLNPNQSVPTLVDRELTLWESRIIMEYLDERFPHPPLMPVYPVARGESRLYMHRIEKDWYTLMNTIINGSASEADAARKQLREELLAIAPVFGQKPYFLSDEFSLVDCYLAPLLWRLPQLGIEFSGPGAKELKGYMTRVFERDSFLASLTEAEREMRLGRS</sequence>
<evidence type="ECO:0000250" key="1"/>
<evidence type="ECO:0000305" key="2"/>
<protein>
    <recommendedName>
        <fullName>Stringent starvation protein A</fullName>
    </recommendedName>
</protein>
<comment type="function">
    <text evidence="1">Forms an equimolar complex with the RNA polymerase holoenzyme (RNAP) but not with the core enzyme.</text>
</comment>
<comment type="similarity">
    <text evidence="2">Belongs to the GST superfamily. HSP26 family.</text>
</comment>
<keyword id="KW-1185">Reference proteome</keyword>
<name>SSPA_SHIFL</name>
<reference key="1">
    <citation type="journal article" date="2002" name="Nucleic Acids Res.">
        <title>Genome sequence of Shigella flexneri 2a: insights into pathogenicity through comparison with genomes of Escherichia coli K12 and O157.</title>
        <authorList>
            <person name="Jin Q."/>
            <person name="Yuan Z."/>
            <person name="Xu J."/>
            <person name="Wang Y."/>
            <person name="Shen Y."/>
            <person name="Lu W."/>
            <person name="Wang J."/>
            <person name="Liu H."/>
            <person name="Yang J."/>
            <person name="Yang F."/>
            <person name="Zhang X."/>
            <person name="Zhang J."/>
            <person name="Yang G."/>
            <person name="Wu H."/>
            <person name="Qu D."/>
            <person name="Dong J."/>
            <person name="Sun L."/>
            <person name="Xue Y."/>
            <person name="Zhao A."/>
            <person name="Gao Y."/>
            <person name="Zhu J."/>
            <person name="Kan B."/>
            <person name="Ding K."/>
            <person name="Chen S."/>
            <person name="Cheng H."/>
            <person name="Yao Z."/>
            <person name="He B."/>
            <person name="Chen R."/>
            <person name="Ma D."/>
            <person name="Qiang B."/>
            <person name="Wen Y."/>
            <person name="Hou Y."/>
            <person name="Yu J."/>
        </authorList>
    </citation>
    <scope>NUCLEOTIDE SEQUENCE [LARGE SCALE GENOMIC DNA]</scope>
    <source>
        <strain>301 / Serotype 2a</strain>
    </source>
</reference>
<reference key="2">
    <citation type="journal article" date="2003" name="Infect. Immun.">
        <title>Complete genome sequence and comparative genomics of Shigella flexneri serotype 2a strain 2457T.</title>
        <authorList>
            <person name="Wei J."/>
            <person name="Goldberg M.B."/>
            <person name="Burland V."/>
            <person name="Venkatesan M.M."/>
            <person name="Deng W."/>
            <person name="Fournier G."/>
            <person name="Mayhew G.F."/>
            <person name="Plunkett G. III"/>
            <person name="Rose D.J."/>
            <person name="Darling A."/>
            <person name="Mau B."/>
            <person name="Perna N.T."/>
            <person name="Payne S.M."/>
            <person name="Runyen-Janecky L.J."/>
            <person name="Zhou S."/>
            <person name="Schwartz D.C."/>
            <person name="Blattner F.R."/>
        </authorList>
    </citation>
    <scope>NUCLEOTIDE SEQUENCE [LARGE SCALE GENOMIC DNA]</scope>
    <source>
        <strain>ATCC 700930 / 2457T / Serotype 2a</strain>
    </source>
</reference>
<feature type="initiator methionine" description="Removed" evidence="1">
    <location>
        <position position="1"/>
    </location>
</feature>
<feature type="chain" id="PRO_0000185883" description="Stringent starvation protein A">
    <location>
        <begin position="2"/>
        <end position="212"/>
    </location>
</feature>
<feature type="domain" description="GST N-terminal">
    <location>
        <begin position="9"/>
        <end position="87"/>
    </location>
</feature>
<feature type="domain" description="GST C-terminal">
    <location>
        <begin position="92"/>
        <end position="209"/>
    </location>
</feature>
<dbReference type="EMBL" id="AE005674">
    <property type="protein sequence ID" value="AAN44733.1"/>
    <property type="molecule type" value="Genomic_DNA"/>
</dbReference>
<dbReference type="EMBL" id="AE014073">
    <property type="protein sequence ID" value="AAP18544.1"/>
    <property type="molecule type" value="Genomic_DNA"/>
</dbReference>
<dbReference type="RefSeq" id="NP_709026.1">
    <property type="nucleotide sequence ID" value="NC_004337.2"/>
</dbReference>
<dbReference type="RefSeq" id="WP_000257293.1">
    <property type="nucleotide sequence ID" value="NZ_WPGW01000026.1"/>
</dbReference>
<dbReference type="SMR" id="P0ACA6"/>
<dbReference type="STRING" id="198214.SF3269"/>
<dbReference type="PaxDb" id="198214-SF3269"/>
<dbReference type="GeneID" id="1026855"/>
<dbReference type="GeneID" id="89518065"/>
<dbReference type="KEGG" id="sfl:SF3269"/>
<dbReference type="KEGG" id="sfx:S3484"/>
<dbReference type="PATRIC" id="fig|198214.7.peg.3872"/>
<dbReference type="HOGENOM" id="CLU_011226_9_3_6"/>
<dbReference type="Proteomes" id="UP000001006">
    <property type="component" value="Chromosome"/>
</dbReference>
<dbReference type="Proteomes" id="UP000002673">
    <property type="component" value="Chromosome"/>
</dbReference>
<dbReference type="GO" id="GO:0005737">
    <property type="term" value="C:cytoplasm"/>
    <property type="evidence" value="ECO:0007669"/>
    <property type="project" value="TreeGrafter"/>
</dbReference>
<dbReference type="CDD" id="cd03186">
    <property type="entry name" value="GST_C_SspA"/>
    <property type="match status" value="1"/>
</dbReference>
<dbReference type="CDD" id="cd03059">
    <property type="entry name" value="GST_N_SspA"/>
    <property type="match status" value="1"/>
</dbReference>
<dbReference type="FunFam" id="1.20.1050.10:FF:000002">
    <property type="entry name" value="Stringent starvation protein A"/>
    <property type="match status" value="1"/>
</dbReference>
<dbReference type="Gene3D" id="1.20.1050.10">
    <property type="match status" value="1"/>
</dbReference>
<dbReference type="Gene3D" id="3.40.30.10">
    <property type="entry name" value="Glutaredoxin"/>
    <property type="match status" value="1"/>
</dbReference>
<dbReference type="InterPro" id="IPR010987">
    <property type="entry name" value="Glutathione-S-Trfase_C-like"/>
</dbReference>
<dbReference type="InterPro" id="IPR036282">
    <property type="entry name" value="Glutathione-S-Trfase_C_sf"/>
</dbReference>
<dbReference type="InterPro" id="IPR040079">
    <property type="entry name" value="Glutathione_S-Trfase"/>
</dbReference>
<dbReference type="InterPro" id="IPR004045">
    <property type="entry name" value="Glutathione_S-Trfase_N"/>
</dbReference>
<dbReference type="InterPro" id="IPR004046">
    <property type="entry name" value="GST_C"/>
</dbReference>
<dbReference type="InterPro" id="IPR050983">
    <property type="entry name" value="GST_Omega/HSP26"/>
</dbReference>
<dbReference type="InterPro" id="IPR034342">
    <property type="entry name" value="SspA_C"/>
</dbReference>
<dbReference type="InterPro" id="IPR034341">
    <property type="entry name" value="SspA_N"/>
</dbReference>
<dbReference type="InterPro" id="IPR036249">
    <property type="entry name" value="Thioredoxin-like_sf"/>
</dbReference>
<dbReference type="NCBIfam" id="NF007016">
    <property type="entry name" value="PRK09481.1"/>
    <property type="match status" value="1"/>
</dbReference>
<dbReference type="PANTHER" id="PTHR43968">
    <property type="match status" value="1"/>
</dbReference>
<dbReference type="PANTHER" id="PTHR43968:SF6">
    <property type="entry name" value="GLUTATHIONE S-TRANSFERASE OMEGA"/>
    <property type="match status" value="1"/>
</dbReference>
<dbReference type="Pfam" id="PF00043">
    <property type="entry name" value="GST_C"/>
    <property type="match status" value="1"/>
</dbReference>
<dbReference type="Pfam" id="PF02798">
    <property type="entry name" value="GST_N"/>
    <property type="match status" value="1"/>
</dbReference>
<dbReference type="SFLD" id="SFLDS00019">
    <property type="entry name" value="Glutathione_Transferase_(cytos"/>
    <property type="match status" value="1"/>
</dbReference>
<dbReference type="SFLD" id="SFLDG00358">
    <property type="entry name" value="Main_(cytGST)"/>
    <property type="match status" value="1"/>
</dbReference>
<dbReference type="SUPFAM" id="SSF47616">
    <property type="entry name" value="GST C-terminal domain-like"/>
    <property type="match status" value="1"/>
</dbReference>
<dbReference type="SUPFAM" id="SSF52833">
    <property type="entry name" value="Thioredoxin-like"/>
    <property type="match status" value="1"/>
</dbReference>
<dbReference type="PROSITE" id="PS50405">
    <property type="entry name" value="GST_CTER"/>
    <property type="match status" value="1"/>
</dbReference>
<dbReference type="PROSITE" id="PS50404">
    <property type="entry name" value="GST_NTER"/>
    <property type="match status" value="1"/>
</dbReference>
<gene>
    <name type="primary">sspA</name>
    <name type="ordered locus">SF3269</name>
    <name type="ordered locus">S3484</name>
</gene>
<proteinExistence type="inferred from homology"/>
<organism>
    <name type="scientific">Shigella flexneri</name>
    <dbReference type="NCBI Taxonomy" id="623"/>
    <lineage>
        <taxon>Bacteria</taxon>
        <taxon>Pseudomonadati</taxon>
        <taxon>Pseudomonadota</taxon>
        <taxon>Gammaproteobacteria</taxon>
        <taxon>Enterobacterales</taxon>
        <taxon>Enterobacteriaceae</taxon>
        <taxon>Shigella</taxon>
    </lineage>
</organism>
<accession>P0ACA6</accession>
<accession>P05838</accession>